<evidence type="ECO:0000250" key="1">
    <source>
        <dbReference type="UniProtKB" id="P0ABF4"/>
    </source>
</evidence>
<evidence type="ECO:0000255" key="2">
    <source>
        <dbReference type="PROSITE-ProRule" id="PRU01278"/>
    </source>
</evidence>
<evidence type="ECO:0000269" key="3">
    <source>
    </source>
</evidence>
<evidence type="ECO:0000269" key="4">
    <source>
    </source>
</evidence>
<evidence type="ECO:0000269" key="5">
    <source>
    </source>
</evidence>
<evidence type="ECO:0000269" key="6">
    <source>
    </source>
</evidence>
<evidence type="ECO:0000269" key="7">
    <source>
    </source>
</evidence>
<evidence type="ECO:0000269" key="8">
    <source>
    </source>
</evidence>
<evidence type="ECO:0000269" key="9">
    <source>
    </source>
</evidence>
<evidence type="ECO:0000269" key="10">
    <source>
    </source>
</evidence>
<evidence type="ECO:0000269" key="11">
    <source>
    </source>
</evidence>
<evidence type="ECO:0000269" key="12">
    <source>
    </source>
</evidence>
<evidence type="ECO:0000269" key="13">
    <source ref="11"/>
</evidence>
<evidence type="ECO:0000303" key="14">
    <source>
    </source>
</evidence>
<evidence type="ECO:0000303" key="15">
    <source>
    </source>
</evidence>
<evidence type="ECO:0000305" key="16"/>
<evidence type="ECO:0000305" key="17">
    <source>
    </source>
</evidence>
<evidence type="ECO:0000305" key="18">
    <source>
    </source>
</evidence>
<evidence type="ECO:0000305" key="19">
    <source>
    </source>
</evidence>
<evidence type="ECO:0000305" key="20">
    <source>
    </source>
</evidence>
<evidence type="ECO:0000305" key="21">
    <source>
    </source>
</evidence>
<reference key="1">
    <citation type="journal article" date="1995" name="J. Bacteriol.">
        <title>Ethanolamine utilization in Salmonella typhimurium: nucleotide sequence, protein expression, and mutational analysis of the cchA cchB eutE eutJ eutG eutH gene cluster.</title>
        <authorList>
            <person name="Stojiljkovic I."/>
            <person name="Baeumler A.J."/>
            <person name="Heffron F."/>
        </authorList>
    </citation>
    <scope>NUCLEOTIDE SEQUENCE [GENOMIC DNA]</scope>
    <scope>POSSIBLE FUNCTION</scope>
    <scope>DISRUPTION PHENOTYPE</scope>
    <source>
        <strain>ATCC 14028s / SGSG 2262</strain>
    </source>
</reference>
<reference key="2">
    <citation type="journal article" date="1999" name="J. Bacteriol.">
        <title>The 17-gene ethanolamine (eut) operon of Salmonella typhimurium encodes five homologues of carboxysome shell proteins.</title>
        <authorList>
            <person name="Kofoid E.C."/>
            <person name="Rappleye C.A."/>
            <person name="Stojiljkovic I."/>
            <person name="Roth J.R."/>
        </authorList>
    </citation>
    <scope>NUCLEOTIDE SEQUENCE [GENOMIC DNA]</scope>
    <scope>DISRUPTION PHENOTYPE</scope>
    <source>
        <strain>LT2</strain>
    </source>
</reference>
<reference key="3">
    <citation type="journal article" date="2001" name="Nature">
        <title>Complete genome sequence of Salmonella enterica serovar Typhimurium LT2.</title>
        <authorList>
            <person name="McClelland M."/>
            <person name="Sanderson K.E."/>
            <person name="Spieth J."/>
            <person name="Clifton S.W."/>
            <person name="Latreille P."/>
            <person name="Courtney L."/>
            <person name="Porwollik S."/>
            <person name="Ali J."/>
            <person name="Dante M."/>
            <person name="Du F."/>
            <person name="Hou S."/>
            <person name="Layman D."/>
            <person name="Leonard S."/>
            <person name="Nguyen C."/>
            <person name="Scott K."/>
            <person name="Holmes A."/>
            <person name="Grewal N."/>
            <person name="Mulvaney E."/>
            <person name="Ryan E."/>
            <person name="Sun H."/>
            <person name="Florea L."/>
            <person name="Miller W."/>
            <person name="Stoneking T."/>
            <person name="Nhan M."/>
            <person name="Waterston R."/>
            <person name="Wilson R.K."/>
        </authorList>
    </citation>
    <scope>NUCLEOTIDE SEQUENCE [LARGE SCALE GENOMIC DNA]</scope>
    <source>
        <strain>LT2 / SGSC1412 / ATCC 700720</strain>
    </source>
</reference>
<reference key="4">
    <citation type="journal article" date="1988" name="J. Bacteriol.">
        <title>Ethanolamine utilization in Salmonella typhimurium.</title>
        <authorList>
            <person name="Roof D.M."/>
            <person name="Roth J.R."/>
        </authorList>
    </citation>
    <scope>FUNCTION</scope>
    <scope>PATHWAY</scope>
    <scope>OPERON</scope>
    <scope>INDUCTION BY ETHANOLAMINE AND COBALAMIN</scope>
    <source>
        <strain>LT2</strain>
    </source>
</reference>
<reference key="5">
    <citation type="journal article" date="2005" name="J. Bacteriol.">
        <title>Minimal functions and physiological conditions required for growth of salmonella enterica on ethanolamine in the absence of the metabolosome.</title>
        <authorList>
            <person name="Brinsmade S.R."/>
            <person name="Paldon T."/>
            <person name="Escalante-Semerena J.C."/>
        </authorList>
    </citation>
    <scope>FUNCTION</scope>
    <scope>DISRUPTION PHENOTYPE</scope>
    <source>
        <strain>LT2</strain>
    </source>
</reference>
<reference key="6">
    <citation type="journal article" date="2006" name="J. Bacteriol.">
        <title>Conserving a volatile metabolite: a role for carboxysome-like organelles in Salmonella enterica.</title>
        <authorList>
            <person name="Penrod J.T."/>
            <person name="Roth J.R."/>
        </authorList>
    </citation>
    <scope>FUNCTION</scope>
    <scope>DISRUPTION PHENOTYPE</scope>
    <source>
        <strain>LT2</strain>
    </source>
</reference>
<reference key="7">
    <citation type="journal article" date="2012" name="PLoS ONE">
        <title>Engineered protein nano-compartments for targeted enzyme localization.</title>
        <authorList>
            <person name="Choudhary S."/>
            <person name="Quin M.B."/>
            <person name="Sanders M.A."/>
            <person name="Johnson E.T."/>
            <person name="Schmidt-Dannert C."/>
        </authorList>
    </citation>
    <scope>FUNCTION</scope>
    <scope>SUBCELLULAR LOCATION</scope>
    <scope>BIOTECHNOLOGY</scope>
    <source>
        <strain>LT2</strain>
    </source>
</reference>
<reference key="8">
    <citation type="journal article" date="2013" name="J. Bacteriol.">
        <title>Evidence that a metabolic microcompartment contains and recycles private cofactor pools.</title>
        <authorList>
            <person name="Huseby D.L."/>
            <person name="Roth J.R."/>
        </authorList>
    </citation>
    <scope>FUNCTION</scope>
    <scope>DISRUPTION PHENOTYPE</scope>
    <source>
        <strain>LT2</strain>
    </source>
</reference>
<reference key="9">
    <citation type="journal article" date="2016" name="Sci. Rep.">
        <title>Engineering formation of multiple recombinant Eut protein nanocompartments in E. coli.</title>
        <authorList>
            <person name="Held M."/>
            <person name="Kolb A."/>
            <person name="Perdue S."/>
            <person name="Hsu S.Y."/>
            <person name="Bloch S.E."/>
            <person name="Quin M.B."/>
            <person name="Schmidt-Dannert C."/>
        </authorList>
    </citation>
    <scope>FUNCTION</scope>
    <scope>INTERACTION WITH EUTQ</scope>
    <scope>IDENTIFICATION BY MASS SPECTROMETRY</scope>
    <scope>SUBCELLULAR LOCATION</scope>
    <scope>BIOTECHNOLOGY</scope>
    <scope>MUTAGENESIS OF VAL-49; 50-ALA--ALA-60; LYS-53; ALA-54; ASP-57; ALA-58; ALA-61; GLN-64 AND ARG-65</scope>
    <source>
        <strain>LT2</strain>
    </source>
</reference>
<reference key="10">
    <citation type="journal article" date="2017" name="ACS Synth. Biol.">
        <title>Evidence for Improved Encapsulated Pathway Behavior in a Bacterial Microcompartment through Shell Protein Engineering.</title>
        <authorList>
            <person name="Slininger Lee M.F."/>
            <person name="Jakobson C.M."/>
            <person name="Tullman-Ercek D."/>
        </authorList>
    </citation>
    <scope>FUNCTION</scope>
    <scope>BIOTECHNOLOGY</scope>
    <scope>MUTAGENESIS OF LYS-24</scope>
    <source>
        <strain>LT2</strain>
    </source>
</reference>
<reference key="11">
    <citation type="journal article" date="2018" name="ACS Catal.">
        <title>Self-Assembling Protein Scaffold System for Easy in Vitro Coimmobilization of Biocatalytic Cascade Enzymes.</title>
        <authorList>
            <person name="Zhang G."/>
            <person name="Quin M.B."/>
            <person name="Schmidt-Dannert C."/>
        </authorList>
    </citation>
    <scope>BIOTECHNOLOGY</scope>
    <source>
        <strain>LT2</strain>
    </source>
</reference>
<reference key="12">
    <citation type="journal article" date="2018" name="Infect. Immun.">
        <title>The Ethanolamine Permease EutH Promotes Vacuole Adaptation of Salmonella enterica and Listeria monocytogenes during Macrophage Infection.</title>
        <authorList>
            <person name="Anderson C.J."/>
            <person name="Satkovich J."/>
            <person name="Koeseoglu V.K."/>
            <person name="Agaisse H."/>
            <person name="Kendall M.M."/>
        </authorList>
    </citation>
    <scope>FUNCTION</scope>
    <source>
        <strain>SL1344</strain>
    </source>
</reference>
<protein>
    <recommendedName>
        <fullName>Bacterial microcompartment shell protein EutM</fullName>
    </recommendedName>
    <alternativeName>
        <fullName evidence="16">Bacterial microcompartment protein homohexamer</fullName>
        <shortName evidence="16">BMC-H</shortName>
    </alternativeName>
    <alternativeName>
        <fullName>Ethanolamine utilization protein EutM</fullName>
    </alternativeName>
</protein>
<gene>
    <name evidence="14" type="primary">eutM</name>
    <name evidence="15" type="synonym">cchA</name>
    <name type="ordered locus">STM2465</name>
</gene>
<feature type="chain" id="PRO_0000004787" description="Bacterial microcompartment shell protein EutM">
    <location>
        <begin position="1"/>
        <end position="96"/>
    </location>
</feature>
<feature type="domain" description="BMC" evidence="2">
    <location>
        <begin position="3"/>
        <end position="87"/>
    </location>
</feature>
<feature type="mutagenesis site" description="No longer complements pduA in the pdu operon." evidence="9">
    <original>K</original>
    <variation>A</variation>
    <location>
        <position position="24"/>
    </location>
</feature>
<feature type="mutagenesis site" description="Still interacts with EutQ." evidence="8">
    <original>V</original>
    <variation>S</variation>
    <location>
        <position position="49"/>
    </location>
</feature>
<feature type="mutagenesis site" description="Still interacts with EutQ." evidence="8">
    <original>AACKAATDAGA</original>
    <variation>SACKSATDSGS</variation>
    <location>
        <begin position="50"/>
        <end position="60"/>
    </location>
</feature>
<feature type="mutagenesis site" description="Still interacts with EutQ." evidence="8">
    <original>K</original>
    <variation>A</variation>
    <location>
        <position position="53"/>
    </location>
</feature>
<feature type="mutagenesis site" description="No longer interacts with EutQ." evidence="8">
    <original>K</original>
    <variation>D</variation>
    <location>
        <position position="53"/>
    </location>
</feature>
<feature type="mutagenesis site" description="Still interacts with EutQ." evidence="8">
    <original>A</original>
    <variation>S</variation>
    <location>
        <position position="54"/>
    </location>
</feature>
<feature type="mutagenesis site" description="No longer interacts with EutQ." evidence="8">
    <original>D</original>
    <variation>A</variation>
    <variation>K</variation>
    <location>
        <position position="57"/>
    </location>
</feature>
<feature type="mutagenesis site" description="Still interacts with EutQ." evidence="8">
    <original>A</original>
    <variation>S</variation>
    <location>
        <position position="58"/>
    </location>
</feature>
<feature type="mutagenesis site" description="Still interacts with EutQ." evidence="8">
    <original>A</original>
    <variation>S</variation>
    <location>
        <position position="61"/>
    </location>
</feature>
<feature type="mutagenesis site" description="Still interacts with EutQ." evidence="8">
    <original>Q</original>
    <variation>A</variation>
    <variation>D</variation>
    <location>
        <position position="64"/>
    </location>
</feature>
<feature type="mutagenesis site" description="No longer interacts with EutQ." evidence="8">
    <original>Q</original>
    <variation>K</variation>
    <location>
        <position position="64"/>
    </location>
</feature>
<feature type="mutagenesis site" description="Still interacts with EutQ." evidence="8">
    <original>R</original>
    <variation>A</variation>
    <location>
        <position position="65"/>
    </location>
</feature>
<keyword id="KW-1283">Bacterial microcompartment</keyword>
<keyword id="KW-1185">Reference proteome</keyword>
<keyword id="KW-0843">Virulence</keyword>
<organism>
    <name type="scientific">Salmonella typhimurium (strain LT2 / SGSC1412 / ATCC 700720)</name>
    <dbReference type="NCBI Taxonomy" id="99287"/>
    <lineage>
        <taxon>Bacteria</taxon>
        <taxon>Pseudomonadati</taxon>
        <taxon>Pseudomonadota</taxon>
        <taxon>Gammaproteobacteria</taxon>
        <taxon>Enterobacterales</taxon>
        <taxon>Enterobacteriaceae</taxon>
        <taxon>Salmonella</taxon>
    </lineage>
</organism>
<sequence length="96" mass="9843">MEALGMIETRGLVALIEASDAMVKAARVKLVGVKQIGGGLCTAMVRGDVAACKAATDAGAAAAQRIGELVSVHVIPRPHGDLEEVFPISFKGDSNI</sequence>
<dbReference type="EMBL" id="U18560">
    <property type="protein sequence ID" value="AAA80207.1"/>
    <property type="molecule type" value="Genomic_DNA"/>
</dbReference>
<dbReference type="EMBL" id="AF093749">
    <property type="protein sequence ID" value="AAC78116.1"/>
    <property type="molecule type" value="Genomic_DNA"/>
</dbReference>
<dbReference type="EMBL" id="AE006468">
    <property type="protein sequence ID" value="AAL21359.1"/>
    <property type="molecule type" value="Genomic_DNA"/>
</dbReference>
<dbReference type="RefSeq" id="NP_461400.1">
    <property type="nucleotide sequence ID" value="NC_003197.2"/>
</dbReference>
<dbReference type="RefSeq" id="WP_000387716.1">
    <property type="nucleotide sequence ID" value="NC_003197.2"/>
</dbReference>
<dbReference type="SMR" id="P41791"/>
<dbReference type="STRING" id="99287.STM2465"/>
<dbReference type="PaxDb" id="99287-STM2465"/>
<dbReference type="GeneID" id="1253987"/>
<dbReference type="KEGG" id="stm:STM2465"/>
<dbReference type="PATRIC" id="fig|99287.12.peg.2603"/>
<dbReference type="HOGENOM" id="CLU_064903_5_3_6"/>
<dbReference type="OMA" id="QFREGVN"/>
<dbReference type="PhylomeDB" id="P41791"/>
<dbReference type="BioCyc" id="SENT99287:STM2465-MONOMER"/>
<dbReference type="UniPathway" id="UPA00560"/>
<dbReference type="Proteomes" id="UP000001014">
    <property type="component" value="Chromosome"/>
</dbReference>
<dbReference type="GO" id="GO:0031471">
    <property type="term" value="C:ethanolamine degradation polyhedral organelle"/>
    <property type="evidence" value="ECO:0000314"/>
    <property type="project" value="UniProtKB"/>
</dbReference>
<dbReference type="GO" id="GO:0046336">
    <property type="term" value="P:ethanolamine catabolic process"/>
    <property type="evidence" value="ECO:0007669"/>
    <property type="project" value="UniProtKB-UniPathway"/>
</dbReference>
<dbReference type="GO" id="GO:0006091">
    <property type="term" value="P:generation of precursor metabolites and energy"/>
    <property type="evidence" value="ECO:0000304"/>
    <property type="project" value="UniProtKB"/>
</dbReference>
<dbReference type="CDD" id="cd07045">
    <property type="entry name" value="BMC_CcmK_like"/>
    <property type="match status" value="1"/>
</dbReference>
<dbReference type="FunFam" id="3.30.70.1710:FF:000001">
    <property type="entry name" value="Ethanolamine utilization protein EutM"/>
    <property type="match status" value="1"/>
</dbReference>
<dbReference type="Gene3D" id="3.30.70.1710">
    <property type="match status" value="1"/>
</dbReference>
<dbReference type="InterPro" id="IPR020808">
    <property type="entry name" value="Bact_microcomp_CS"/>
</dbReference>
<dbReference type="InterPro" id="IPR000249">
    <property type="entry name" value="BMC_dom"/>
</dbReference>
<dbReference type="InterPro" id="IPR050575">
    <property type="entry name" value="BMC_shell"/>
</dbReference>
<dbReference type="InterPro" id="IPR037233">
    <property type="entry name" value="CcmK-like_sf"/>
</dbReference>
<dbReference type="InterPro" id="IPR044872">
    <property type="entry name" value="CcmK/CsoS1_BMC"/>
</dbReference>
<dbReference type="NCBIfam" id="NF012018">
    <property type="entry name" value="PRK15474.1"/>
    <property type="match status" value="1"/>
</dbReference>
<dbReference type="PANTHER" id="PTHR33941:SF10">
    <property type="entry name" value="BACTERIAL MICROCOMPARTMENT SHELL PROTEIN EUTM"/>
    <property type="match status" value="1"/>
</dbReference>
<dbReference type="PANTHER" id="PTHR33941">
    <property type="entry name" value="PROPANEDIOL UTILIZATION PROTEIN PDUA"/>
    <property type="match status" value="1"/>
</dbReference>
<dbReference type="Pfam" id="PF00936">
    <property type="entry name" value="BMC"/>
    <property type="match status" value="1"/>
</dbReference>
<dbReference type="SMART" id="SM00877">
    <property type="entry name" value="BMC"/>
    <property type="match status" value="1"/>
</dbReference>
<dbReference type="SUPFAM" id="SSF143414">
    <property type="entry name" value="CcmK-like"/>
    <property type="match status" value="1"/>
</dbReference>
<dbReference type="PROSITE" id="PS01139">
    <property type="entry name" value="BMC_1"/>
    <property type="match status" value="1"/>
</dbReference>
<dbReference type="PROSITE" id="PS51930">
    <property type="entry name" value="BMC_2"/>
    <property type="match status" value="1"/>
</dbReference>
<accession>P41791</accession>
<comment type="function">
    <text evidence="1 6 8 9">Probably a major component of the bacterial microcompartment (BMC) shell dedicated to ethanolamine degradation (PubMed:22428024, PubMed:27063436). Each homohexamer has a central pore with an opening of up to 8.6 Angstroms. A positively-charged funnel leads to the pore from each side of the hexamer. The pore probably allows metabolite passage into and out of the BMC (By similarity). Expression of eutK, eutL, eutM, eutN, eutS (eutSMNLK) in E.coli leads to formation of a single BMC. Expression alone leads to thick filaments that interfere with cell separation (PubMed:22428024, PubMed:27063436). Coexpression of eutQ with eutSMNLK permits E.coli to make cells with more than one mobile BMC, as is usual in vivo. May play a role in BMC shell biogenesis (PubMed:27063436). Can replace homolog pduA in the pdu operon, cells grow better than wild-type on 1,2-propanediol and vitamin B12. Protein is incorporated into the pdu BMC microcompartment (PubMed:28585808).</text>
</comment>
<comment type="function">
    <text evidence="5 7 18 19 21">The ethanolamine (EA) catabolic bacterial microcompartment (BMC) probably concentrates low levels of ethanolamine catabolic enzymes, concentrates volatile reaction intermediates, keeps the level of toxic acetaldehyde low, generates enough acetyl-CoA to support cell growth, and maintains a pool of free coenzyme A (CoA) and NAD (Probable) (PubMed:16585748). Deletion of BMC genes (eutK, eutL, eutM) restores growth of eutD deletions, suggesting there are dedicated pools of coenzyme A (CoA) and NAD in the BMC (PubMed:23585538).</text>
</comment>
<comment type="function">
    <text evidence="10 11">Expression of the eut operon allows this bacteria to use ethanolamine as a carbon, nitrogen and energy source. It relies on cobalamin (vitamin B12) both as a cofactor for the ethanolamine ammonia-lyase (EAL) activity and to induce the operon (PubMed:3045078). EA enhances bacterial survival in macrophages in a concentration-dependent manner, suggesting it is an important nutrient during infection (PubMed:29531136).</text>
</comment>
<comment type="pathway">
    <text evidence="11">Amine and polyamine degradation; ethanolamine degradation.</text>
</comment>
<comment type="subunit">
    <text evidence="1 8">Homohexamer with a central pore of up to 8.6 Angstroms diameter. The hexamers pack into a two-dimensional array (By similarity). Interacts with EutQ; a probably cytoplasm-facing helix (Val-49 to Gln-64) interacts with N-terminus of EutQ (PubMed:27063436).</text>
</comment>
<comment type="subcellular location">
    <subcellularLocation>
        <location evidence="8 20">Bacterial microcompartment</location>
    </subcellularLocation>
</comment>
<comment type="induction">
    <text evidence="11">Part of the 17-gene eut operon transcribed from a single promoter, induced by ethanolamine and adenosylcobalamin (AdoCbl, vitamin B12).</text>
</comment>
<comment type="disruption phenotype">
    <text evidence="3 4 5 12">Essential, it cannot be deleted when the 17-gene operon is otherwise intact, possibly due to polar effects on downstream genes (PubMed:7868611). Not required for cobalamin-dependent degradation of ethanolamine (EA) when polar effects are removed. A double eutD-eutM deletion is also not required for growth in the above conditions (PubMed:10464203). A double eutM-eutN strain grows as well as wild-type on EA and cyanocobalamin, but a quadruple eutL-eutK eutM-eutN strain does not grow (PubMed:16291677). A non-polar deletion mutant grows on EA at pH 5.5 to pH 7.0 but not at pH 8.0 or pH 8.5, releases increased amounts of acetaldehyde on EA plus vitamin B12. Preventing acetaldehyde vapor loss allows growth up to pH 8.5 (PubMed:16585748).</text>
</comment>
<comment type="biotechnology">
    <text evidence="6 8 9">Artificial BMCs can be made in E.coli by expressing eutK, eutL, eutM, eutN, eutS (eutSMNLK) or eutS alone. Cargo proteins can be targeted to them and beta-galactosidase (lacZ) was active within the BMC, showing the BMC allows passage of substrate into the interior. This can lead to the development of tailored BMCs for specific metabolic reactions (PubMed:22428024, PubMed:27063436). The addition of eutQ to the eutSMNLK construct results in biogenesis of multiple BMCs (PubMed:27063436). Can incorporate into the pdu BMC where it alters growth, suggesting fine-tuning metabolite flux by using different BMC components is possible (PubMed:28585808).</text>
</comment>
<comment type="biotechnology">
    <text evidence="13">Can be used as a self-assembling protein scaffold for synthetic biology. Overexpressed, purified protein with a SpyCatcher tag added to the C-terminus yields self-assembling fibrils that are stable at pH 5-9 and up to 50 degrees Celsius. Addition of SpyTagged cargo proteins leads to isopeptide bond formation between the scaffold and cargo proteins, colocalizing and stabilizing the cargo proteins and reducing the time for the reaction to make maximimal product.</text>
</comment>
<comment type="miscellaneous">
    <text evidence="4">The need for a bacterial microcompartment in EA metabolism can be bypassed by increasing the levels of EAL and an acetaldehyde dehydrogenase (not necessarily EutE).</text>
</comment>
<comment type="similarity">
    <text evidence="2 17">Belongs to the bacterial microcompartments protein family.</text>
</comment>
<name>EUTM_SALTY</name>
<proteinExistence type="evidence at protein level"/>